<dbReference type="EC" id="2.5.1.76" evidence="1"/>
<dbReference type="EMBL" id="AE008384">
    <property type="protein sequence ID" value="AAM29829.1"/>
    <property type="molecule type" value="Genomic_DNA"/>
</dbReference>
<dbReference type="RefSeq" id="WP_011032087.1">
    <property type="nucleotide sequence ID" value="NC_003901.1"/>
</dbReference>
<dbReference type="SMR" id="Q8Q0K3"/>
<dbReference type="KEGG" id="mma:MM_0133"/>
<dbReference type="PATRIC" id="fig|192952.21.peg.152"/>
<dbReference type="eggNOG" id="arCOG01434">
    <property type="taxonomic scope" value="Archaea"/>
</dbReference>
<dbReference type="HOGENOM" id="CLU_666687_0_0_2"/>
<dbReference type="UniPathway" id="UPA00355"/>
<dbReference type="Proteomes" id="UP000000595">
    <property type="component" value="Chromosome"/>
</dbReference>
<dbReference type="GO" id="GO:0005524">
    <property type="term" value="F:ATP binding"/>
    <property type="evidence" value="ECO:0007669"/>
    <property type="project" value="TreeGrafter"/>
</dbReference>
<dbReference type="GO" id="GO:0044686">
    <property type="term" value="F:cysteate synthase activity"/>
    <property type="evidence" value="ECO:0007669"/>
    <property type="project" value="UniProtKB-UniRule"/>
</dbReference>
<dbReference type="GO" id="GO:0003941">
    <property type="term" value="F:L-serine ammonia-lyase activity"/>
    <property type="evidence" value="ECO:0007669"/>
    <property type="project" value="TreeGrafter"/>
</dbReference>
<dbReference type="GO" id="GO:0000287">
    <property type="term" value="F:magnesium ion binding"/>
    <property type="evidence" value="ECO:0007669"/>
    <property type="project" value="TreeGrafter"/>
</dbReference>
<dbReference type="GO" id="GO:0030170">
    <property type="term" value="F:pyridoxal phosphate binding"/>
    <property type="evidence" value="ECO:0007669"/>
    <property type="project" value="UniProtKB-UniRule"/>
</dbReference>
<dbReference type="GO" id="GO:0030378">
    <property type="term" value="F:serine racemase activity"/>
    <property type="evidence" value="ECO:0007669"/>
    <property type="project" value="TreeGrafter"/>
</dbReference>
<dbReference type="GO" id="GO:0018114">
    <property type="term" value="F:threonine racemase activity"/>
    <property type="evidence" value="ECO:0007669"/>
    <property type="project" value="TreeGrafter"/>
</dbReference>
<dbReference type="GO" id="GO:0019295">
    <property type="term" value="P:coenzyme M biosynthetic process"/>
    <property type="evidence" value="ECO:0007669"/>
    <property type="project" value="UniProtKB-UniRule"/>
</dbReference>
<dbReference type="GO" id="GO:0070179">
    <property type="term" value="P:D-serine biosynthetic process"/>
    <property type="evidence" value="ECO:0007669"/>
    <property type="project" value="TreeGrafter"/>
</dbReference>
<dbReference type="Gene3D" id="3.40.50.1100">
    <property type="match status" value="2"/>
</dbReference>
<dbReference type="HAMAP" id="MF_02109">
    <property type="entry name" value="Cya_synthase"/>
    <property type="match status" value="1"/>
</dbReference>
<dbReference type="InterPro" id="IPR022401">
    <property type="entry name" value="Cysteate_synthase"/>
</dbReference>
<dbReference type="InterPro" id="IPR001926">
    <property type="entry name" value="TrpB-like_PALP"/>
</dbReference>
<dbReference type="InterPro" id="IPR036052">
    <property type="entry name" value="TrpB-like_PALP_sf"/>
</dbReference>
<dbReference type="NCBIfam" id="TIGR03844">
    <property type="entry name" value="cysteate_syn"/>
    <property type="match status" value="1"/>
</dbReference>
<dbReference type="PANTHER" id="PTHR43050">
    <property type="entry name" value="SERINE / THREONINE RACEMASE FAMILY MEMBER"/>
    <property type="match status" value="1"/>
</dbReference>
<dbReference type="PANTHER" id="PTHR43050:SF1">
    <property type="entry name" value="SERINE RACEMASE"/>
    <property type="match status" value="1"/>
</dbReference>
<dbReference type="Pfam" id="PF00291">
    <property type="entry name" value="PALP"/>
    <property type="match status" value="1"/>
</dbReference>
<dbReference type="SUPFAM" id="SSF53686">
    <property type="entry name" value="Tryptophan synthase beta subunit-like PLP-dependent enzymes"/>
    <property type="match status" value="1"/>
</dbReference>
<organism>
    <name type="scientific">Methanosarcina mazei (strain ATCC BAA-159 / DSM 3647 / Goe1 / Go1 / JCM 11833 / OCM 88)</name>
    <name type="common">Methanosarcina frisia</name>
    <dbReference type="NCBI Taxonomy" id="192952"/>
    <lineage>
        <taxon>Archaea</taxon>
        <taxon>Methanobacteriati</taxon>
        <taxon>Methanobacteriota</taxon>
        <taxon>Stenosarchaea group</taxon>
        <taxon>Methanomicrobia</taxon>
        <taxon>Methanosarcinales</taxon>
        <taxon>Methanosarcinaceae</taxon>
        <taxon>Methanosarcina</taxon>
    </lineage>
</organism>
<keyword id="KW-0174">Coenzyme M biosynthesis</keyword>
<keyword id="KW-0663">Pyridoxal phosphate</keyword>
<keyword id="KW-0808">Transferase</keyword>
<evidence type="ECO:0000255" key="1">
    <source>
        <dbReference type="HAMAP-Rule" id="MF_02109"/>
    </source>
</evidence>
<accession>Q8Q0K3</accession>
<proteinExistence type="inferred from homology"/>
<sequence length="416" mass="45396">MGRFTLKCLKCGREYGQEYRLTCDNDDSLLRADYFEKKLELRDQPGIGRFHSWLPVQEELTTEAGPITYKSEALAKELGLSNLYIGFSGYWPEREALIKTCSFKELEAHPTMQLLKESGGKAIVLASAGNTGRAFAYSSSLTGTDAYIVVPDSGVSSIWLPEEPANSIHLISMTPGNDYTDAINLAGRLAKLPGMVPEGGARNVARREGMGTVMLDAAVTIGKMPDHYFQAVGSGTGGMSAWEASLRLRDDGRFGSKLPKLQLAQNLPFVPMYNAWKAGRREIIPDIDMKDAKKQIEETYATVLTNRAPPYSITGGLYDALVDTDGIMYAITREEALEAKALFESLEGIDILEPSAVAAASLLKAVEAGNVEKDDVILLNIAGGGFKRLKEDFTLFQVEPEVTVSSSEVSLDELKI</sequence>
<protein>
    <recommendedName>
        <fullName evidence="1">Cysteate synthase</fullName>
        <shortName evidence="1">CS</shortName>
        <shortName evidence="1">Cya synthase</shortName>
        <ecNumber evidence="1">2.5.1.76</ecNumber>
    </recommendedName>
</protein>
<feature type="chain" id="PRO_0000392653" description="Cysteate synthase">
    <location>
        <begin position="1"/>
        <end position="416"/>
    </location>
</feature>
<feature type="binding site" evidence="1">
    <location>
        <position position="130"/>
    </location>
    <ligand>
        <name>pyridoxal 5'-phosphate</name>
        <dbReference type="ChEBI" id="CHEBI:597326"/>
    </ligand>
</feature>
<feature type="modified residue" description="N6-(pyridoxal phosphate)lysine" evidence="1">
    <location>
        <position position="104"/>
    </location>
</feature>
<comment type="function">
    <text evidence="1">Specifically catalyzes the beta-elimination of phosphate from L-phosphoserine and the beta-addition of sulfite to the dehydroalanine intermediate to produce L-cysteate.</text>
</comment>
<comment type="catalytic activity">
    <reaction evidence="1">
        <text>O-phospho-L-serine + sulfite + H(+) = L-cysteate + phosphate</text>
        <dbReference type="Rhea" id="RHEA:26486"/>
        <dbReference type="ChEBI" id="CHEBI:15378"/>
        <dbReference type="ChEBI" id="CHEBI:17359"/>
        <dbReference type="ChEBI" id="CHEBI:43474"/>
        <dbReference type="ChEBI" id="CHEBI:57524"/>
        <dbReference type="ChEBI" id="CHEBI:58090"/>
        <dbReference type="EC" id="2.5.1.76"/>
    </reaction>
</comment>
<comment type="cofactor">
    <cofactor evidence="1">
        <name>pyridoxal 5'-phosphate</name>
        <dbReference type="ChEBI" id="CHEBI:597326"/>
    </cofactor>
</comment>
<comment type="pathway">
    <text evidence="1">Cofactor biosynthesis; coenzyme M biosynthesis.</text>
</comment>
<comment type="subunit">
    <text evidence="1">Homotrimer.</text>
</comment>
<comment type="similarity">
    <text evidence="1">Belongs to the threonine synthase family. Cysteate synthase subfamily.</text>
</comment>
<reference key="1">
    <citation type="journal article" date="2002" name="J. Mol. Microbiol. Biotechnol.">
        <title>The genome of Methanosarcina mazei: evidence for lateral gene transfer between Bacteria and Archaea.</title>
        <authorList>
            <person name="Deppenmeier U."/>
            <person name="Johann A."/>
            <person name="Hartsch T."/>
            <person name="Merkl R."/>
            <person name="Schmitz R.A."/>
            <person name="Martinez-Arias R."/>
            <person name="Henne A."/>
            <person name="Wiezer A."/>
            <person name="Baeumer S."/>
            <person name="Jacobi C."/>
            <person name="Brueggemann H."/>
            <person name="Lienard T."/>
            <person name="Christmann A."/>
            <person name="Boemecke M."/>
            <person name="Steckel S."/>
            <person name="Bhattacharyya A."/>
            <person name="Lykidis A."/>
            <person name="Overbeek R."/>
            <person name="Klenk H.-P."/>
            <person name="Gunsalus R.P."/>
            <person name="Fritz H.-J."/>
            <person name="Gottschalk G."/>
        </authorList>
    </citation>
    <scope>NUCLEOTIDE SEQUENCE [LARGE SCALE GENOMIC DNA]</scope>
    <source>
        <strain>ATCC BAA-159 / DSM 3647 / Goe1 / Go1 / JCM 11833 / OCM 88</strain>
    </source>
</reference>
<gene>
    <name type="ordered locus">MM_0133</name>
</gene>
<name>CYAS_METMA</name>